<organism>
    <name type="scientific">Bothrops cotiara</name>
    <name type="common">Cotiara</name>
    <name type="synonym">Rhinocerophis cotiara</name>
    <dbReference type="NCBI Taxonomy" id="8727"/>
    <lineage>
        <taxon>Eukaryota</taxon>
        <taxon>Metazoa</taxon>
        <taxon>Chordata</taxon>
        <taxon>Craniata</taxon>
        <taxon>Vertebrata</taxon>
        <taxon>Euteleostomi</taxon>
        <taxon>Lepidosauria</taxon>
        <taxon>Squamata</taxon>
        <taxon>Bifurcata</taxon>
        <taxon>Unidentata</taxon>
        <taxon>Episquamata</taxon>
        <taxon>Toxicofera</taxon>
        <taxon>Serpentes</taxon>
        <taxon>Colubroidea</taxon>
        <taxon>Viperidae</taxon>
        <taxon>Crotalinae</taxon>
        <taxon>Bothrops</taxon>
    </lineage>
</organism>
<name>VSP_BOTCO</name>
<protein>
    <recommendedName>
        <fullName>Snake venom serine protease</fullName>
        <shortName>SVSP</shortName>
        <ecNumber>3.4.21.-</ecNumber>
    </recommendedName>
</protein>
<keyword id="KW-0903">Direct protein sequencing</keyword>
<keyword id="KW-1015">Disulfide bond</keyword>
<keyword id="KW-0325">Glycoprotein</keyword>
<keyword id="KW-1199">Hemostasis impairing toxin</keyword>
<keyword id="KW-0378">Hydrolase</keyword>
<keyword id="KW-0645">Protease</keyword>
<keyword id="KW-0964">Secreted</keyword>
<keyword id="KW-0720">Serine protease</keyword>
<keyword id="KW-0800">Toxin</keyword>
<evidence type="ECO:0000250" key="1"/>
<evidence type="ECO:0000305" key="2"/>
<comment type="function">
    <text evidence="1">Snake venom serine protease that may act in the hemostasis system of the prey.</text>
</comment>
<comment type="subcellular location">
    <subcellularLocation>
        <location>Secreted</location>
    </subcellularLocation>
</comment>
<comment type="tissue specificity">
    <text>Expressed by the venom gland.</text>
</comment>
<comment type="PTM">
    <text evidence="1">Glycosylated.</text>
</comment>
<comment type="PTM">
    <text evidence="1">Contains 6 disulfide bonds.</text>
</comment>
<comment type="similarity">
    <text evidence="2">Belongs to the peptidase S1 family. Snake venom subfamily.</text>
</comment>
<reference key="1">
    <citation type="journal article" date="2008" name="J. Proteomics">
        <title>Snake venomics of the Brazilian pitvipers Bothrops cotiara and Bothrops fonsecai. Identification of taxonomy markers.</title>
        <authorList>
            <person name="Tashima A.K."/>
            <person name="Sanz L."/>
            <person name="Camargo A.C."/>
            <person name="Serrano S.M."/>
            <person name="Calvete J.J."/>
        </authorList>
    </citation>
    <scope>PROTEIN SEQUENCE</scope>
    <scope>IDENTIFICATION BY MASS SPECTROMETRY</scope>
    <source>
        <tissue>Venom</tissue>
    </source>
</reference>
<accession>P0DMH5</accession>
<dbReference type="EC" id="3.4.21.-"/>
<dbReference type="GO" id="GO:0005576">
    <property type="term" value="C:extracellular region"/>
    <property type="evidence" value="ECO:0007669"/>
    <property type="project" value="UniProtKB-SubCell"/>
</dbReference>
<dbReference type="GO" id="GO:0008236">
    <property type="term" value="F:serine-type peptidase activity"/>
    <property type="evidence" value="ECO:0007669"/>
    <property type="project" value="UniProtKB-KW"/>
</dbReference>
<dbReference type="GO" id="GO:0090729">
    <property type="term" value="F:toxin activity"/>
    <property type="evidence" value="ECO:0007669"/>
    <property type="project" value="UniProtKB-KW"/>
</dbReference>
<dbReference type="GO" id="GO:0006508">
    <property type="term" value="P:proteolysis"/>
    <property type="evidence" value="ECO:0007669"/>
    <property type="project" value="UniProtKB-KW"/>
</dbReference>
<proteinExistence type="evidence at protein level"/>
<sequence>VVGGDECNINEHRFL</sequence>
<feature type="chain" id="PRO_0000428815" description="Snake venom serine protease">
    <location>
        <begin position="1"/>
        <end position="15" status="greater than"/>
    </location>
</feature>
<feature type="sequence variant">
    <original>V</original>
    <variation>I</variation>
    <location>
        <position position="1"/>
    </location>
</feature>
<feature type="sequence variant">
    <original>F</original>
    <variation>S</variation>
    <location>
        <position position="14"/>
    </location>
</feature>
<feature type="non-terminal residue">
    <location>
        <position position="15"/>
    </location>
</feature>